<dbReference type="EMBL" id="CP000561">
    <property type="status" value="NOT_ANNOTATED_CDS"/>
    <property type="molecule type" value="Genomic_DNA"/>
</dbReference>
<dbReference type="RefSeq" id="WP_011850312.1">
    <property type="nucleotide sequence ID" value="NC_009073.1"/>
</dbReference>
<dbReference type="SMR" id="P0DOY4"/>
<dbReference type="GeneID" id="59388220"/>
<dbReference type="OrthoDB" id="26813at2157"/>
<dbReference type="Proteomes" id="UP000001431">
    <property type="component" value="Chromosome"/>
</dbReference>
<dbReference type="GO" id="GO:0005737">
    <property type="term" value="C:cytoplasm"/>
    <property type="evidence" value="ECO:0007669"/>
    <property type="project" value="UniProtKB-KW"/>
</dbReference>
<dbReference type="GO" id="GO:0005856">
    <property type="term" value="C:cytoskeleton"/>
    <property type="evidence" value="ECO:0007669"/>
    <property type="project" value="UniProtKB-SubCell"/>
</dbReference>
<feature type="chain" id="PRO_0000439074" description="Arcadin-3">
    <location>
        <begin position="1"/>
        <end position="56"/>
    </location>
</feature>
<accession>P0DOY4</accession>
<organism>
    <name type="scientific">Pyrobaculum calidifontis (strain DSM 21063 / JCM 11548 / VA1)</name>
    <dbReference type="NCBI Taxonomy" id="410359"/>
    <lineage>
        <taxon>Archaea</taxon>
        <taxon>Thermoproteota</taxon>
        <taxon>Thermoprotei</taxon>
        <taxon>Thermoproteales</taxon>
        <taxon>Thermoproteaceae</taxon>
        <taxon>Pyrobaculum</taxon>
    </lineage>
</organism>
<proteinExistence type="predicted"/>
<protein>
    <recommendedName>
        <fullName evidence="2">Arcadin-3</fullName>
    </recommendedName>
</protein>
<comment type="function">
    <text evidence="1">Part of an actin-like archaeal cytoskeleton.</text>
</comment>
<comment type="subcellular location">
    <subcellularLocation>
        <location evidence="3">Cytoplasm</location>
        <location evidence="3">Cytoskeleton</location>
    </subcellularLocation>
    <text evidence="1">Forms cell-spanning helical structures.</text>
</comment>
<comment type="miscellaneous">
    <text evidence="4">Belongs to a conserved five-gene operon within Thermoproteales denoted Arcade (actin-related cytoskeleton in Archaea involved in shape determination).</text>
</comment>
<reference key="1">
    <citation type="submission" date="2007-02" db="EMBL/GenBank/DDBJ databases">
        <title>Complete sequence of Pyrobaculum calidifontis JCM 11548.</title>
        <authorList>
            <consortium name="US DOE Joint Genome Institute"/>
            <person name="Copeland A."/>
            <person name="Lucas S."/>
            <person name="Lapidus A."/>
            <person name="Barry K."/>
            <person name="Glavina del Rio T."/>
            <person name="Dalin E."/>
            <person name="Tice H."/>
            <person name="Pitluck S."/>
            <person name="Chain P."/>
            <person name="Malfatti S."/>
            <person name="Shin M."/>
            <person name="Vergez L."/>
            <person name="Schmutz J."/>
            <person name="Larimer F."/>
            <person name="Land M."/>
            <person name="Hauser L."/>
            <person name="Kyrpides N."/>
            <person name="Mikhailova N."/>
            <person name="Cozen A.E."/>
            <person name="Fitz-Gibbon S.T."/>
            <person name="House C.H."/>
            <person name="Saltikov C."/>
            <person name="Lowe T.M."/>
            <person name="Richardson P."/>
        </authorList>
    </citation>
    <scope>NUCLEOTIDE SEQUENCE [LARGE SCALE GENOMIC DNA]</scope>
    <source>
        <strain>DSM 21063 / JCM 11548 / VA1</strain>
    </source>
</reference>
<reference key="2">
    <citation type="journal article" date="2011" name="Mol. Microbiol.">
        <title>An actin-based cytoskeleton in archaea.</title>
        <authorList>
            <person name="Ettema T.J."/>
            <person name="Lindaas A.C."/>
            <person name="Bernander R."/>
        </authorList>
    </citation>
    <scope>FUNCTION</scope>
    <scope>SUBCELLULAR LOCATION</scope>
</reference>
<name>RKD3_PYRCJ</name>
<evidence type="ECO:0000269" key="1">
    <source>
    </source>
</evidence>
<evidence type="ECO:0000303" key="2">
    <source>
    </source>
</evidence>
<evidence type="ECO:0000305" key="3"/>
<evidence type="ECO:0000305" key="4">
    <source>
    </source>
</evidence>
<keyword id="KW-0963">Cytoplasm</keyword>
<keyword id="KW-0206">Cytoskeleton</keyword>
<sequence length="56" mass="6363">MDILLEEVRKVFGNTDEGKLAERLIVAYRQRGARGAREVLKKYLEELGVDVADIES</sequence>
<gene>
    <name evidence="2" type="primary">rkd-3</name>
    <name evidence="3" type="ordered locus">Pcal_1636.1</name>
</gene>